<dbReference type="EMBL" id="CP000758">
    <property type="protein sequence ID" value="ABS13826.1"/>
    <property type="molecule type" value="Genomic_DNA"/>
</dbReference>
<dbReference type="RefSeq" id="WP_010661464.1">
    <property type="nucleotide sequence ID" value="NC_009667.1"/>
</dbReference>
<dbReference type="SMR" id="A6WXX2"/>
<dbReference type="STRING" id="439375.Oant_1106"/>
<dbReference type="KEGG" id="oan:Oant_1106"/>
<dbReference type="eggNOG" id="COG0355">
    <property type="taxonomic scope" value="Bacteria"/>
</dbReference>
<dbReference type="HOGENOM" id="CLU_084338_2_1_5"/>
<dbReference type="PhylomeDB" id="A6WXX2"/>
<dbReference type="Proteomes" id="UP000002301">
    <property type="component" value="Chromosome 1"/>
</dbReference>
<dbReference type="GO" id="GO:0005886">
    <property type="term" value="C:plasma membrane"/>
    <property type="evidence" value="ECO:0007669"/>
    <property type="project" value="UniProtKB-SubCell"/>
</dbReference>
<dbReference type="GO" id="GO:0045259">
    <property type="term" value="C:proton-transporting ATP synthase complex"/>
    <property type="evidence" value="ECO:0007669"/>
    <property type="project" value="UniProtKB-KW"/>
</dbReference>
<dbReference type="GO" id="GO:0005524">
    <property type="term" value="F:ATP binding"/>
    <property type="evidence" value="ECO:0007669"/>
    <property type="project" value="UniProtKB-UniRule"/>
</dbReference>
<dbReference type="GO" id="GO:0046933">
    <property type="term" value="F:proton-transporting ATP synthase activity, rotational mechanism"/>
    <property type="evidence" value="ECO:0007669"/>
    <property type="project" value="UniProtKB-UniRule"/>
</dbReference>
<dbReference type="CDD" id="cd12152">
    <property type="entry name" value="F1-ATPase_delta"/>
    <property type="match status" value="1"/>
</dbReference>
<dbReference type="Gene3D" id="2.60.15.10">
    <property type="entry name" value="F0F1 ATP synthase delta/epsilon subunit, N-terminal"/>
    <property type="match status" value="1"/>
</dbReference>
<dbReference type="HAMAP" id="MF_00530">
    <property type="entry name" value="ATP_synth_epsil_bac"/>
    <property type="match status" value="1"/>
</dbReference>
<dbReference type="InterPro" id="IPR001469">
    <property type="entry name" value="ATP_synth_F1_dsu/esu"/>
</dbReference>
<dbReference type="InterPro" id="IPR020546">
    <property type="entry name" value="ATP_synth_F1_dsu/esu_N"/>
</dbReference>
<dbReference type="InterPro" id="IPR036771">
    <property type="entry name" value="ATPsynth_dsu/esu_N"/>
</dbReference>
<dbReference type="NCBIfam" id="TIGR01216">
    <property type="entry name" value="ATP_synt_epsi"/>
    <property type="match status" value="1"/>
</dbReference>
<dbReference type="NCBIfam" id="NF001851">
    <property type="entry name" value="PRK00571.2-4"/>
    <property type="match status" value="1"/>
</dbReference>
<dbReference type="PANTHER" id="PTHR13822">
    <property type="entry name" value="ATP SYNTHASE DELTA/EPSILON CHAIN"/>
    <property type="match status" value="1"/>
</dbReference>
<dbReference type="PANTHER" id="PTHR13822:SF10">
    <property type="entry name" value="ATP SYNTHASE EPSILON CHAIN, CHLOROPLASTIC"/>
    <property type="match status" value="1"/>
</dbReference>
<dbReference type="Pfam" id="PF02823">
    <property type="entry name" value="ATP-synt_DE_N"/>
    <property type="match status" value="1"/>
</dbReference>
<dbReference type="SUPFAM" id="SSF51344">
    <property type="entry name" value="Epsilon subunit of F1F0-ATP synthase N-terminal domain"/>
    <property type="match status" value="1"/>
</dbReference>
<proteinExistence type="inferred from homology"/>
<protein>
    <recommendedName>
        <fullName evidence="1">ATP synthase epsilon chain</fullName>
    </recommendedName>
    <alternativeName>
        <fullName evidence="1">ATP synthase F1 sector epsilon subunit</fullName>
    </alternativeName>
    <alternativeName>
        <fullName evidence="1">F-ATPase epsilon subunit</fullName>
    </alternativeName>
</protein>
<feature type="chain" id="PRO_1000056514" description="ATP synthase epsilon chain">
    <location>
        <begin position="1"/>
        <end position="135"/>
    </location>
</feature>
<keyword id="KW-0066">ATP synthesis</keyword>
<keyword id="KW-0997">Cell inner membrane</keyword>
<keyword id="KW-1003">Cell membrane</keyword>
<keyword id="KW-0139">CF(1)</keyword>
<keyword id="KW-0375">Hydrogen ion transport</keyword>
<keyword id="KW-0406">Ion transport</keyword>
<keyword id="KW-0472">Membrane</keyword>
<keyword id="KW-1185">Reference proteome</keyword>
<keyword id="KW-0813">Transport</keyword>
<organism>
    <name type="scientific">Brucella anthropi (strain ATCC 49188 / DSM 6882 / CCUG 24695 / JCM 21032 / LMG 3331 / NBRC 15819 / NCTC 12168 / Alc 37)</name>
    <name type="common">Ochrobactrum anthropi</name>
    <dbReference type="NCBI Taxonomy" id="439375"/>
    <lineage>
        <taxon>Bacteria</taxon>
        <taxon>Pseudomonadati</taxon>
        <taxon>Pseudomonadota</taxon>
        <taxon>Alphaproteobacteria</taxon>
        <taxon>Hyphomicrobiales</taxon>
        <taxon>Brucellaceae</taxon>
        <taxon>Brucella/Ochrobactrum group</taxon>
        <taxon>Brucella</taxon>
    </lineage>
</organism>
<name>ATPE_BRUA4</name>
<accession>A6WXX2</accession>
<gene>
    <name evidence="1" type="primary">atpC</name>
    <name type="ordered locus">Oant_1106</name>
</gene>
<reference key="1">
    <citation type="journal article" date="2011" name="J. Bacteriol.">
        <title>Genome of Ochrobactrum anthropi ATCC 49188 T, a versatile opportunistic pathogen and symbiont of several eukaryotic hosts.</title>
        <authorList>
            <person name="Chain P.S."/>
            <person name="Lang D.M."/>
            <person name="Comerci D.J."/>
            <person name="Malfatti S.A."/>
            <person name="Vergez L.M."/>
            <person name="Shin M."/>
            <person name="Ugalde R.A."/>
            <person name="Garcia E."/>
            <person name="Tolmasky M.E."/>
        </authorList>
    </citation>
    <scope>NUCLEOTIDE SEQUENCE [LARGE SCALE GENOMIC DNA]</scope>
    <source>
        <strain>ATCC 49188 / DSM 6882 / CCUG 24695 / JCM 21032 / LMG 3331 / NBRC 15819 / NCTC 12168 / Alc 37</strain>
    </source>
</reference>
<comment type="function">
    <text evidence="1">Produces ATP from ADP in the presence of a proton gradient across the membrane.</text>
</comment>
<comment type="subunit">
    <text evidence="1">F-type ATPases have 2 components, CF(1) - the catalytic core - and CF(0) - the membrane proton channel. CF(1) has five subunits: alpha(3), beta(3), gamma(1), delta(1), epsilon(1). CF(0) has three main subunits: a, b and c.</text>
</comment>
<comment type="subcellular location">
    <subcellularLocation>
        <location evidence="1">Cell inner membrane</location>
        <topology evidence="1">Peripheral membrane protein</topology>
    </subcellularLocation>
</comment>
<comment type="similarity">
    <text evidence="1">Belongs to the ATPase epsilon chain family.</text>
</comment>
<sequence>MAQAFQFELVSPERLLLSAQVTEVVIPGSEGYLTALAGHSPLMTTIMPGVVSVKLADGKSDSYVVFGGFADITPQGCTVLAESATHVDDIDPADIQRRIEHARKALDDASSNEHRTKAEIFLHQLMTLQGTIMPA</sequence>
<evidence type="ECO:0000255" key="1">
    <source>
        <dbReference type="HAMAP-Rule" id="MF_00530"/>
    </source>
</evidence>